<dbReference type="EMBL" id="AP008230">
    <property type="protein sequence ID" value="BAE82265.1"/>
    <property type="molecule type" value="Genomic_DNA"/>
</dbReference>
<dbReference type="RefSeq" id="WP_005810154.1">
    <property type="nucleotide sequence ID" value="NC_007907.1"/>
</dbReference>
<dbReference type="SMR" id="Q250M7"/>
<dbReference type="STRING" id="138119.DSY0476"/>
<dbReference type="KEGG" id="dsy:DSY0476"/>
<dbReference type="eggNOG" id="COG0091">
    <property type="taxonomic scope" value="Bacteria"/>
</dbReference>
<dbReference type="HOGENOM" id="CLU_083987_3_3_9"/>
<dbReference type="Proteomes" id="UP000001946">
    <property type="component" value="Chromosome"/>
</dbReference>
<dbReference type="GO" id="GO:0022625">
    <property type="term" value="C:cytosolic large ribosomal subunit"/>
    <property type="evidence" value="ECO:0007669"/>
    <property type="project" value="TreeGrafter"/>
</dbReference>
<dbReference type="GO" id="GO:0019843">
    <property type="term" value="F:rRNA binding"/>
    <property type="evidence" value="ECO:0007669"/>
    <property type="project" value="UniProtKB-UniRule"/>
</dbReference>
<dbReference type="GO" id="GO:0003735">
    <property type="term" value="F:structural constituent of ribosome"/>
    <property type="evidence" value="ECO:0007669"/>
    <property type="project" value="InterPro"/>
</dbReference>
<dbReference type="GO" id="GO:0006412">
    <property type="term" value="P:translation"/>
    <property type="evidence" value="ECO:0007669"/>
    <property type="project" value="UniProtKB-UniRule"/>
</dbReference>
<dbReference type="CDD" id="cd00336">
    <property type="entry name" value="Ribosomal_L22"/>
    <property type="match status" value="1"/>
</dbReference>
<dbReference type="FunFam" id="3.90.470.10:FF:000011">
    <property type="entry name" value="50S ribosomal protein L22"/>
    <property type="match status" value="1"/>
</dbReference>
<dbReference type="Gene3D" id="3.90.470.10">
    <property type="entry name" value="Ribosomal protein L22/L17"/>
    <property type="match status" value="1"/>
</dbReference>
<dbReference type="HAMAP" id="MF_01331_B">
    <property type="entry name" value="Ribosomal_uL22_B"/>
    <property type="match status" value="1"/>
</dbReference>
<dbReference type="InterPro" id="IPR001063">
    <property type="entry name" value="Ribosomal_uL22"/>
</dbReference>
<dbReference type="InterPro" id="IPR005727">
    <property type="entry name" value="Ribosomal_uL22_bac/chlpt-type"/>
</dbReference>
<dbReference type="InterPro" id="IPR047867">
    <property type="entry name" value="Ribosomal_uL22_bac/org-type"/>
</dbReference>
<dbReference type="InterPro" id="IPR018260">
    <property type="entry name" value="Ribosomal_uL22_CS"/>
</dbReference>
<dbReference type="InterPro" id="IPR036394">
    <property type="entry name" value="Ribosomal_uL22_sf"/>
</dbReference>
<dbReference type="NCBIfam" id="TIGR01044">
    <property type="entry name" value="rplV_bact"/>
    <property type="match status" value="1"/>
</dbReference>
<dbReference type="PANTHER" id="PTHR13501">
    <property type="entry name" value="CHLOROPLAST 50S RIBOSOMAL PROTEIN L22-RELATED"/>
    <property type="match status" value="1"/>
</dbReference>
<dbReference type="PANTHER" id="PTHR13501:SF8">
    <property type="entry name" value="LARGE RIBOSOMAL SUBUNIT PROTEIN UL22M"/>
    <property type="match status" value="1"/>
</dbReference>
<dbReference type="Pfam" id="PF00237">
    <property type="entry name" value="Ribosomal_L22"/>
    <property type="match status" value="1"/>
</dbReference>
<dbReference type="SUPFAM" id="SSF54843">
    <property type="entry name" value="Ribosomal protein L22"/>
    <property type="match status" value="1"/>
</dbReference>
<dbReference type="PROSITE" id="PS00464">
    <property type="entry name" value="RIBOSOMAL_L22"/>
    <property type="match status" value="1"/>
</dbReference>
<sequence length="114" mass="12765">MQQAKAIARYVRISPRKVRQVVDLIRGKNVSDALAILQFTPKGATEPVTKVLQSAVANAEHNYEMDTDALIVKEIYVDEGPTLKRIKPRAMGRADQIRKRTSHITVVVVEKKEG</sequence>
<name>RL22_DESHY</name>
<keyword id="KW-1185">Reference proteome</keyword>
<keyword id="KW-0687">Ribonucleoprotein</keyword>
<keyword id="KW-0689">Ribosomal protein</keyword>
<keyword id="KW-0694">RNA-binding</keyword>
<keyword id="KW-0699">rRNA-binding</keyword>
<comment type="function">
    <text evidence="1">This protein binds specifically to 23S rRNA; its binding is stimulated by other ribosomal proteins, e.g. L4, L17, and L20. It is important during the early stages of 50S assembly. It makes multiple contacts with different domains of the 23S rRNA in the assembled 50S subunit and ribosome (By similarity).</text>
</comment>
<comment type="function">
    <text evidence="1">The globular domain of the protein is located near the polypeptide exit tunnel on the outside of the subunit, while an extended beta-hairpin is found that lines the wall of the exit tunnel in the center of the 70S ribosome.</text>
</comment>
<comment type="subunit">
    <text evidence="1">Part of the 50S ribosomal subunit.</text>
</comment>
<comment type="similarity">
    <text evidence="1">Belongs to the universal ribosomal protein uL22 family.</text>
</comment>
<evidence type="ECO:0000255" key="1">
    <source>
        <dbReference type="HAMAP-Rule" id="MF_01331"/>
    </source>
</evidence>
<evidence type="ECO:0000305" key="2"/>
<organism>
    <name type="scientific">Desulfitobacterium hafniense (strain Y51)</name>
    <dbReference type="NCBI Taxonomy" id="138119"/>
    <lineage>
        <taxon>Bacteria</taxon>
        <taxon>Bacillati</taxon>
        <taxon>Bacillota</taxon>
        <taxon>Clostridia</taxon>
        <taxon>Eubacteriales</taxon>
        <taxon>Desulfitobacteriaceae</taxon>
        <taxon>Desulfitobacterium</taxon>
    </lineage>
</organism>
<accession>Q250M7</accession>
<gene>
    <name evidence="1" type="primary">rplV</name>
    <name type="ordered locus">DSY0476</name>
</gene>
<feature type="chain" id="PRO_0000354462" description="Large ribosomal subunit protein uL22">
    <location>
        <begin position="1"/>
        <end position="114"/>
    </location>
</feature>
<protein>
    <recommendedName>
        <fullName evidence="1">Large ribosomal subunit protein uL22</fullName>
    </recommendedName>
    <alternativeName>
        <fullName evidence="2">50S ribosomal protein L22</fullName>
    </alternativeName>
</protein>
<reference key="1">
    <citation type="journal article" date="2006" name="J. Bacteriol.">
        <title>Complete genome sequence of the dehalorespiring bacterium Desulfitobacterium hafniense Y51 and comparison with Dehalococcoides ethenogenes 195.</title>
        <authorList>
            <person name="Nonaka H."/>
            <person name="Keresztes G."/>
            <person name="Shinoda Y."/>
            <person name="Ikenaga Y."/>
            <person name="Abe M."/>
            <person name="Naito K."/>
            <person name="Inatomi K."/>
            <person name="Furukawa K."/>
            <person name="Inui M."/>
            <person name="Yukawa H."/>
        </authorList>
    </citation>
    <scope>NUCLEOTIDE SEQUENCE [LARGE SCALE GENOMIC DNA]</scope>
    <source>
        <strain>Y51</strain>
    </source>
</reference>
<proteinExistence type="inferred from homology"/>